<keyword id="KW-0027">Amidation</keyword>
<keyword id="KW-0090">Biological rhythms</keyword>
<keyword id="KW-0165">Cleavage on pair of basic residues</keyword>
<keyword id="KW-0903">Direct protein sequencing</keyword>
<keyword id="KW-1185">Reference proteome</keyword>
<keyword id="KW-0964">Secreted</keyword>
<keyword id="KW-0732">Signal</keyword>
<gene>
    <name type="primary">Pdf</name>
    <name type="ORF">CG6496</name>
</gene>
<feature type="signal peptide" evidence="2">
    <location>
        <begin position="1"/>
        <end position="24"/>
    </location>
</feature>
<feature type="peptide" id="PRO_0000043162" description="PDF precursor-related peptide" evidence="1">
    <location>
        <begin position="25"/>
        <end position="79"/>
    </location>
</feature>
<feature type="peptide" id="PRO_0000043163" description="Neuropeptide PDF" evidence="9">
    <location>
        <begin position="83"/>
        <end position="100"/>
    </location>
</feature>
<feature type="modified residue" description="Alanine amide" evidence="9">
    <location>
        <position position="100"/>
    </location>
</feature>
<feature type="sequence conflict" description="In Ref. 1; AAC98309." evidence="13" ref="1">
    <original>Y</original>
    <variation>F</variation>
    <location>
        <position position="4"/>
    </location>
</feature>
<dbReference type="EMBL" id="AF110059">
    <property type="protein sequence ID" value="AAC98309.1"/>
    <property type="molecule type" value="Genomic_DNA"/>
</dbReference>
<dbReference type="EMBL" id="AE014297">
    <property type="protein sequence ID" value="AAF56593.1"/>
    <property type="molecule type" value="Genomic_DNA"/>
</dbReference>
<dbReference type="EMBL" id="AY071681">
    <property type="protein sequence ID" value="AAL49303.2"/>
    <property type="status" value="ALT_INIT"/>
    <property type="molecule type" value="mRNA"/>
</dbReference>
<dbReference type="RefSeq" id="NP_524517.1">
    <property type="nucleotide sequence ID" value="NM_079793.3"/>
</dbReference>
<dbReference type="BioGRID" id="68089">
    <property type="interactions" value="4"/>
</dbReference>
<dbReference type="FunCoup" id="O96690">
    <property type="interactions" value="8"/>
</dbReference>
<dbReference type="IntAct" id="O96690">
    <property type="interactions" value="1"/>
</dbReference>
<dbReference type="STRING" id="7227.FBpp0084396"/>
<dbReference type="PaxDb" id="7227-FBpp0084396"/>
<dbReference type="DNASU" id="43193"/>
<dbReference type="EnsemblMetazoa" id="FBtr0085024">
    <property type="protein sequence ID" value="FBpp0084396"/>
    <property type="gene ID" value="FBgn0023178"/>
</dbReference>
<dbReference type="GeneID" id="43193"/>
<dbReference type="KEGG" id="dme:Dmel_CG6496"/>
<dbReference type="AGR" id="FB:FBgn0023178"/>
<dbReference type="CTD" id="64146"/>
<dbReference type="FlyBase" id="FBgn0023178">
    <property type="gene designation" value="Pdf"/>
</dbReference>
<dbReference type="VEuPathDB" id="VectorBase:FBgn0023178"/>
<dbReference type="eggNOG" id="ENOG502T6YK">
    <property type="taxonomic scope" value="Eukaryota"/>
</dbReference>
<dbReference type="HOGENOM" id="CLU_2335781_0_0_1"/>
<dbReference type="InParanoid" id="O96690"/>
<dbReference type="OMA" id="MPDEERY"/>
<dbReference type="OrthoDB" id="8178425at2759"/>
<dbReference type="PhylomeDB" id="O96690"/>
<dbReference type="BioGRID-ORCS" id="43193">
    <property type="hits" value="0 hits in 1 CRISPR screen"/>
</dbReference>
<dbReference type="GenomeRNAi" id="43193"/>
<dbReference type="PRO" id="PR:O96690"/>
<dbReference type="Proteomes" id="UP000000803">
    <property type="component" value="Chromosome 3R"/>
</dbReference>
<dbReference type="Bgee" id="FBgn0023178">
    <property type="expression patterns" value="Expressed in LNv neuron (Drosophila) in brain and 45 other cell types or tissues"/>
</dbReference>
<dbReference type="ExpressionAtlas" id="O96690">
    <property type="expression patterns" value="baseline and differential"/>
</dbReference>
<dbReference type="GO" id="GO:0005615">
    <property type="term" value="C:extracellular space"/>
    <property type="evidence" value="ECO:0000314"/>
    <property type="project" value="FlyBase"/>
</dbReference>
<dbReference type="GO" id="GO:0043005">
    <property type="term" value="C:neuron projection"/>
    <property type="evidence" value="ECO:0000314"/>
    <property type="project" value="FlyBase"/>
</dbReference>
<dbReference type="GO" id="GO:0043025">
    <property type="term" value="C:neuronal cell body"/>
    <property type="evidence" value="ECO:0000314"/>
    <property type="project" value="FlyBase"/>
</dbReference>
<dbReference type="GO" id="GO:0005184">
    <property type="term" value="F:neuropeptide hormone activity"/>
    <property type="evidence" value="ECO:0000304"/>
    <property type="project" value="FlyBase"/>
</dbReference>
<dbReference type="GO" id="GO:0005102">
    <property type="term" value="F:signaling receptor binding"/>
    <property type="evidence" value="ECO:0000353"/>
    <property type="project" value="UniProtKB"/>
</dbReference>
<dbReference type="GO" id="GO:0007189">
    <property type="term" value="P:adenylate cyclase-activating G protein-coupled receptor signaling pathway"/>
    <property type="evidence" value="ECO:0000314"/>
    <property type="project" value="FlyBase"/>
</dbReference>
<dbReference type="GO" id="GO:0007623">
    <property type="term" value="P:circadian rhythm"/>
    <property type="evidence" value="ECO:0000315"/>
    <property type="project" value="FlyBase"/>
</dbReference>
<dbReference type="GO" id="GO:0042745">
    <property type="term" value="P:circadian sleep/wake cycle"/>
    <property type="evidence" value="ECO:0000315"/>
    <property type="project" value="FlyBase"/>
</dbReference>
<dbReference type="GO" id="GO:0008062">
    <property type="term" value="P:eclosion rhythm"/>
    <property type="evidence" value="ECO:0000304"/>
    <property type="project" value="FlyBase"/>
</dbReference>
<dbReference type="GO" id="GO:0043153">
    <property type="term" value="P:entrainment of circadian clock by photoperiod"/>
    <property type="evidence" value="ECO:0000315"/>
    <property type="project" value="FlyBase"/>
</dbReference>
<dbReference type="GO" id="GO:0042332">
    <property type="term" value="P:gravitaxis"/>
    <property type="evidence" value="ECO:0000314"/>
    <property type="project" value="FlyBase"/>
</dbReference>
<dbReference type="GO" id="GO:0045475">
    <property type="term" value="P:locomotor rhythm"/>
    <property type="evidence" value="ECO:0000315"/>
    <property type="project" value="UniProtKB"/>
</dbReference>
<dbReference type="GO" id="GO:0007617">
    <property type="term" value="P:mating behavior"/>
    <property type="evidence" value="ECO:0000315"/>
    <property type="project" value="FlyBase"/>
</dbReference>
<dbReference type="GO" id="GO:0007218">
    <property type="term" value="P:neuropeptide signaling pathway"/>
    <property type="evidence" value="ECO:0000314"/>
    <property type="project" value="FlyBase"/>
</dbReference>
<dbReference type="GO" id="GO:0010841">
    <property type="term" value="P:positive regulation of circadian sleep/wake cycle, wakefulness"/>
    <property type="evidence" value="ECO:0000315"/>
    <property type="project" value="FlyBase"/>
</dbReference>
<dbReference type="GO" id="GO:0042749">
    <property type="term" value="P:regulation of circadian sleep/wake cycle"/>
    <property type="evidence" value="ECO:0000315"/>
    <property type="project" value="FlyBase"/>
</dbReference>
<dbReference type="GO" id="GO:1904059">
    <property type="term" value="P:regulation of locomotor rhythm"/>
    <property type="evidence" value="ECO:0000315"/>
    <property type="project" value="FlyBase"/>
</dbReference>
<dbReference type="GO" id="GO:1901562">
    <property type="term" value="P:response to paraquat"/>
    <property type="evidence" value="ECO:0000315"/>
    <property type="project" value="FlyBase"/>
</dbReference>
<dbReference type="InterPro" id="IPR009396">
    <property type="entry name" value="Pigment_DH"/>
</dbReference>
<dbReference type="Pfam" id="PF06324">
    <property type="entry name" value="Pigment_DH"/>
    <property type="match status" value="1"/>
</dbReference>
<evidence type="ECO:0000250" key="1"/>
<evidence type="ECO:0000255" key="2"/>
<evidence type="ECO:0000269" key="3">
    <source>
    </source>
</evidence>
<evidence type="ECO:0000269" key="4">
    <source>
    </source>
</evidence>
<evidence type="ECO:0000269" key="5">
    <source>
    </source>
</evidence>
<evidence type="ECO:0000269" key="6">
    <source>
    </source>
</evidence>
<evidence type="ECO:0000269" key="7">
    <source>
    </source>
</evidence>
<evidence type="ECO:0000269" key="8">
    <source>
    </source>
</evidence>
<evidence type="ECO:0000269" key="9">
    <source>
    </source>
</evidence>
<evidence type="ECO:0000269" key="10">
    <source>
    </source>
</evidence>
<evidence type="ECO:0000269" key="11">
    <source>
    </source>
</evidence>
<evidence type="ECO:0000303" key="12">
    <source>
    </source>
</evidence>
<evidence type="ECO:0000305" key="13"/>
<name>PDF_DROME</name>
<accession>O96690</accession>
<accession>Q7JYY1</accession>
<accession>Q9VBE9</accession>
<comment type="function">
    <text evidence="3 5 6 7 8 10">Neuropeptide PDF is the main transmitter regulating circadian locomotor rhythms. Required to maintain behavioral rhythms under constant conditions by coordinating pacemaker interactions in the circadian system (PubMed:10619432, PubMed:10777797, PubMed:15356209). Together with CCHa1, involved in regulating intensity and periodicity of daytime activity, possibly by modulating rhythmic expression of circadian protein PER/period in a subset of clock neurons, but not TIM/timeless (PubMed:36786215). Acts on small and large ventral lateral neurons to control sleep and regulates the state transition from sleep to wake (PubMed:19038223, PubMed:19230663).</text>
</comment>
<comment type="subcellular location">
    <subcellularLocation>
        <location evidence="1">Secreted</location>
    </subcellularLocation>
</comment>
<comment type="tissue specificity">
    <text evidence="3 4 11">Predominantly expressed in adult head. Expressed at higher level in males than in females. In adult brain, it is specifically expressed in the ventral lateral neurons (LNvs) as well as in 2-4 tritocerebral cells and 4-6 abdominal cells.</text>
</comment>
<comment type="developmental stage">
    <text evidence="4 11">Expressed at constant level, without strong circadian variations. Its amount nevertheless oscillates along day and night cycles in the termini of dorsally projected axons of LNvs.</text>
</comment>
<comment type="mass spectrometry">
    <molecule>Neuropeptide PDF</molecule>
</comment>
<comment type="disruption phenotype">
    <text evidence="3 7 8 10">Increases total sleep time, decreases sleep latency, leads to loss of morning activity peak, and a failure to wake up in advance of light-on anticipation (PubMed:19038223, PubMed:19230663). In a CCHa1 mutant background, diminished morning activity and phase-advanced evening activity compared to single mutant (PubMed:36786215). No significant effect on free-running period but reduced power and rhythmicity of free-running activity, which is further reduced in a CCHa1 mutant background (PubMed:10619432, PubMed:36786215). No effect on photic entrainment of circadian rhythms (PubMed:36786215).</text>
</comment>
<comment type="similarity">
    <text evidence="13">Belongs to the arthropod PDH family.</text>
</comment>
<comment type="sequence caution" evidence="13">
    <conflict type="erroneous initiation">
        <sequence resource="EMBL-CDS" id="AAL49303"/>
    </conflict>
</comment>
<proteinExistence type="evidence at protein level"/>
<reference key="1">
    <citation type="journal article" date="1998" name="J. Biol. Rhythms">
        <title>Isolation and chronobiological analysis of a neuropeptide pigment-dispersing factor gene in Drosophila melanogaster.</title>
        <authorList>
            <person name="Park J.H."/>
            <person name="Hall J.C."/>
        </authorList>
    </citation>
    <scope>NUCLEOTIDE SEQUENCE [GENOMIC DNA / MRNA]</scope>
    <scope>TISSUE SPECIFICITY</scope>
    <scope>DEVELOPMENTAL STAGE</scope>
    <source>
        <strain>Canton-S</strain>
        <tissue>Head</tissue>
    </source>
</reference>
<reference key="2">
    <citation type="journal article" date="2000" name="Science">
        <title>The genome sequence of Drosophila melanogaster.</title>
        <authorList>
            <person name="Adams M.D."/>
            <person name="Celniker S.E."/>
            <person name="Holt R.A."/>
            <person name="Evans C.A."/>
            <person name="Gocayne J.D."/>
            <person name="Amanatides P.G."/>
            <person name="Scherer S.E."/>
            <person name="Li P.W."/>
            <person name="Hoskins R.A."/>
            <person name="Galle R.F."/>
            <person name="George R.A."/>
            <person name="Lewis S.E."/>
            <person name="Richards S."/>
            <person name="Ashburner M."/>
            <person name="Henderson S.N."/>
            <person name="Sutton G.G."/>
            <person name="Wortman J.R."/>
            <person name="Yandell M.D."/>
            <person name="Zhang Q."/>
            <person name="Chen L.X."/>
            <person name="Brandon R.C."/>
            <person name="Rogers Y.-H.C."/>
            <person name="Blazej R.G."/>
            <person name="Champe M."/>
            <person name="Pfeiffer B.D."/>
            <person name="Wan K.H."/>
            <person name="Doyle C."/>
            <person name="Baxter E.G."/>
            <person name="Helt G."/>
            <person name="Nelson C.R."/>
            <person name="Miklos G.L.G."/>
            <person name="Abril J.F."/>
            <person name="Agbayani A."/>
            <person name="An H.-J."/>
            <person name="Andrews-Pfannkoch C."/>
            <person name="Baldwin D."/>
            <person name="Ballew R.M."/>
            <person name="Basu A."/>
            <person name="Baxendale J."/>
            <person name="Bayraktaroglu L."/>
            <person name="Beasley E.M."/>
            <person name="Beeson K.Y."/>
            <person name="Benos P.V."/>
            <person name="Berman B.P."/>
            <person name="Bhandari D."/>
            <person name="Bolshakov S."/>
            <person name="Borkova D."/>
            <person name="Botchan M.R."/>
            <person name="Bouck J."/>
            <person name="Brokstein P."/>
            <person name="Brottier P."/>
            <person name="Burtis K.C."/>
            <person name="Busam D.A."/>
            <person name="Butler H."/>
            <person name="Cadieu E."/>
            <person name="Center A."/>
            <person name="Chandra I."/>
            <person name="Cherry J.M."/>
            <person name="Cawley S."/>
            <person name="Dahlke C."/>
            <person name="Davenport L.B."/>
            <person name="Davies P."/>
            <person name="de Pablos B."/>
            <person name="Delcher A."/>
            <person name="Deng Z."/>
            <person name="Mays A.D."/>
            <person name="Dew I."/>
            <person name="Dietz S.M."/>
            <person name="Dodson K."/>
            <person name="Doup L.E."/>
            <person name="Downes M."/>
            <person name="Dugan-Rocha S."/>
            <person name="Dunkov B.C."/>
            <person name="Dunn P."/>
            <person name="Durbin K.J."/>
            <person name="Evangelista C.C."/>
            <person name="Ferraz C."/>
            <person name="Ferriera S."/>
            <person name="Fleischmann W."/>
            <person name="Fosler C."/>
            <person name="Gabrielian A.E."/>
            <person name="Garg N.S."/>
            <person name="Gelbart W.M."/>
            <person name="Glasser K."/>
            <person name="Glodek A."/>
            <person name="Gong F."/>
            <person name="Gorrell J.H."/>
            <person name="Gu Z."/>
            <person name="Guan P."/>
            <person name="Harris M."/>
            <person name="Harris N.L."/>
            <person name="Harvey D.A."/>
            <person name="Heiman T.J."/>
            <person name="Hernandez J.R."/>
            <person name="Houck J."/>
            <person name="Hostin D."/>
            <person name="Houston K.A."/>
            <person name="Howland T.J."/>
            <person name="Wei M.-H."/>
            <person name="Ibegwam C."/>
            <person name="Jalali M."/>
            <person name="Kalush F."/>
            <person name="Karpen G.H."/>
            <person name="Ke Z."/>
            <person name="Kennison J.A."/>
            <person name="Ketchum K.A."/>
            <person name="Kimmel B.E."/>
            <person name="Kodira C.D."/>
            <person name="Kraft C.L."/>
            <person name="Kravitz S."/>
            <person name="Kulp D."/>
            <person name="Lai Z."/>
            <person name="Lasko P."/>
            <person name="Lei Y."/>
            <person name="Levitsky A.A."/>
            <person name="Li J.H."/>
            <person name="Li Z."/>
            <person name="Liang Y."/>
            <person name="Lin X."/>
            <person name="Liu X."/>
            <person name="Mattei B."/>
            <person name="McIntosh T.C."/>
            <person name="McLeod M.P."/>
            <person name="McPherson D."/>
            <person name="Merkulov G."/>
            <person name="Milshina N.V."/>
            <person name="Mobarry C."/>
            <person name="Morris J."/>
            <person name="Moshrefi A."/>
            <person name="Mount S.M."/>
            <person name="Moy M."/>
            <person name="Murphy B."/>
            <person name="Murphy L."/>
            <person name="Muzny D.M."/>
            <person name="Nelson D.L."/>
            <person name="Nelson D.R."/>
            <person name="Nelson K.A."/>
            <person name="Nixon K."/>
            <person name="Nusskern D.R."/>
            <person name="Pacleb J.M."/>
            <person name="Palazzolo M."/>
            <person name="Pittman G.S."/>
            <person name="Pan S."/>
            <person name="Pollard J."/>
            <person name="Puri V."/>
            <person name="Reese M.G."/>
            <person name="Reinert K."/>
            <person name="Remington K."/>
            <person name="Saunders R.D.C."/>
            <person name="Scheeler F."/>
            <person name="Shen H."/>
            <person name="Shue B.C."/>
            <person name="Siden-Kiamos I."/>
            <person name="Simpson M."/>
            <person name="Skupski M.P."/>
            <person name="Smith T.J."/>
            <person name="Spier E."/>
            <person name="Spradling A.C."/>
            <person name="Stapleton M."/>
            <person name="Strong R."/>
            <person name="Sun E."/>
            <person name="Svirskas R."/>
            <person name="Tector C."/>
            <person name="Turner R."/>
            <person name="Venter E."/>
            <person name="Wang A.H."/>
            <person name="Wang X."/>
            <person name="Wang Z.-Y."/>
            <person name="Wassarman D.A."/>
            <person name="Weinstock G.M."/>
            <person name="Weissenbach J."/>
            <person name="Williams S.M."/>
            <person name="Woodage T."/>
            <person name="Worley K.C."/>
            <person name="Wu D."/>
            <person name="Yang S."/>
            <person name="Yao Q.A."/>
            <person name="Ye J."/>
            <person name="Yeh R.-F."/>
            <person name="Zaveri J.S."/>
            <person name="Zhan M."/>
            <person name="Zhang G."/>
            <person name="Zhao Q."/>
            <person name="Zheng L."/>
            <person name="Zheng X.H."/>
            <person name="Zhong F.N."/>
            <person name="Zhong W."/>
            <person name="Zhou X."/>
            <person name="Zhu S.C."/>
            <person name="Zhu X."/>
            <person name="Smith H.O."/>
            <person name="Gibbs R.A."/>
            <person name="Myers E.W."/>
            <person name="Rubin G.M."/>
            <person name="Venter J.C."/>
        </authorList>
    </citation>
    <scope>NUCLEOTIDE SEQUENCE [LARGE SCALE GENOMIC DNA]</scope>
    <source>
        <strain>Berkeley</strain>
    </source>
</reference>
<reference key="3">
    <citation type="journal article" date="2002" name="Genome Biol.">
        <title>Annotation of the Drosophila melanogaster euchromatic genome: a systematic review.</title>
        <authorList>
            <person name="Misra S."/>
            <person name="Crosby M.A."/>
            <person name="Mungall C.J."/>
            <person name="Matthews B.B."/>
            <person name="Campbell K.S."/>
            <person name="Hradecky P."/>
            <person name="Huang Y."/>
            <person name="Kaminker J.S."/>
            <person name="Millburn G.H."/>
            <person name="Prochnik S.E."/>
            <person name="Smith C.D."/>
            <person name="Tupy J.L."/>
            <person name="Whitfield E.J."/>
            <person name="Bayraktaroglu L."/>
            <person name="Berman B.P."/>
            <person name="Bettencourt B.R."/>
            <person name="Celniker S.E."/>
            <person name="de Grey A.D.N.J."/>
            <person name="Drysdale R.A."/>
            <person name="Harris N.L."/>
            <person name="Richter J."/>
            <person name="Russo S."/>
            <person name="Schroeder A.J."/>
            <person name="Shu S.Q."/>
            <person name="Stapleton M."/>
            <person name="Yamada C."/>
            <person name="Ashburner M."/>
            <person name="Gelbart W.M."/>
            <person name="Rubin G.M."/>
            <person name="Lewis S.E."/>
        </authorList>
    </citation>
    <scope>GENOME REANNOTATION</scope>
    <source>
        <strain>Berkeley</strain>
    </source>
</reference>
<reference key="4">
    <citation type="journal article" date="2002" name="Genome Biol.">
        <title>A Drosophila full-length cDNA resource.</title>
        <authorList>
            <person name="Stapleton M."/>
            <person name="Carlson J.W."/>
            <person name="Brokstein P."/>
            <person name="Yu C."/>
            <person name="Champe M."/>
            <person name="George R.A."/>
            <person name="Guarin H."/>
            <person name="Kronmiller B."/>
            <person name="Pacleb J.M."/>
            <person name="Park S."/>
            <person name="Wan K.H."/>
            <person name="Rubin G.M."/>
            <person name="Celniker S.E."/>
        </authorList>
    </citation>
    <scope>NUCLEOTIDE SEQUENCE [LARGE SCALE MRNA]</scope>
    <source>
        <strain>Berkeley</strain>
        <tissue>Head</tissue>
    </source>
</reference>
<reference key="5">
    <citation type="journal article" date="2011" name="J. Proteome Res.">
        <title>Peptidomics and peptide hormone processing in the Drosophila midgut.</title>
        <authorList>
            <person name="Reiher W."/>
            <person name="Shirras C."/>
            <person name="Kahnt J."/>
            <person name="Baumeister S."/>
            <person name="Isaac R.E."/>
            <person name="Wegener C."/>
        </authorList>
    </citation>
    <scope>PROTEIN SEQUENCE OF 83-100</scope>
    <scope>IDENTIFICATION BY MASS SPECTROMETRY</scope>
    <scope>MASS SPECTROMETRY</scope>
    <scope>AMIDATION AT ALA-100</scope>
    <source>
        <tissue evidence="12">Midgut</tissue>
    </source>
</reference>
<reference key="6">
    <citation type="journal article" date="1999" name="Cell">
        <title>A pdf neuropeptide gene mutation and ablation of PDF neurons each cause severe abnormalities of behavioral circadian rhythms in Drosophila.</title>
        <authorList>
            <person name="Renn S.C.C."/>
            <person name="Park J.H."/>
            <person name="Rosbash M."/>
            <person name="Hall J.C."/>
            <person name="Taghert P.H."/>
        </authorList>
    </citation>
    <scope>FUNCTION</scope>
    <scope>TISSUE SPECIFICITY</scope>
    <scope>DISRUPTION PHENOTYPE</scope>
</reference>
<reference key="7">
    <citation type="journal article" date="1999" name="Cell">
        <authorList>
            <person name="Renn S.C.C."/>
            <person name="Park J.H."/>
            <person name="Rosbash M."/>
            <person name="Hall J.C."/>
            <person name="Taghert P.H."/>
        </authorList>
    </citation>
    <scope>ERRATUM OF PUBMED:10619432</scope>
</reference>
<reference key="8">
    <citation type="journal article" date="2000" name="Proc. Natl. Acad. Sci. U.S.A.">
        <title>Differential regulation of circadian pacemaker output by separate clock genes in Drosophila.</title>
        <authorList>
            <person name="Park J.H."/>
            <person name="Helfrich-Foerster C."/>
            <person name="Lee G."/>
            <person name="Liu L."/>
            <person name="Rosbash M."/>
            <person name="Hall J.C."/>
        </authorList>
    </citation>
    <scope>TISSUE SPECIFICITY</scope>
    <scope>DEVELOPMENTAL STAGE</scope>
</reference>
<reference key="9">
    <citation type="journal article" date="2000" name="J. Neurosci.">
        <title>Ectopic expression of the neuropeptide pigment-dispersing factor alters behavioral rhythms in Drosophila melanogaster.</title>
        <authorList>
            <person name="Helfrich-Foerster C."/>
            <person name="Taueber M."/>
            <person name="Park J.H."/>
            <person name="Muehlig-Versen M."/>
            <person name="Schneuwly S."/>
            <person name="Hofbauer A."/>
        </authorList>
    </citation>
    <scope>FUNCTION</scope>
</reference>
<reference key="10">
    <citation type="journal article" date="2004" name="J. Neurosci.">
        <title>The neuropeptide pigment-dispersing factor coordinates pacemaker interactions in the Drosophila circadian system.</title>
        <authorList>
            <person name="Lin Y."/>
            <person name="Stormo G.D."/>
            <person name="Taghert P.H."/>
        </authorList>
    </citation>
    <scope>FUNCTION</scope>
</reference>
<reference key="11">
    <citation type="journal article" date="2008" name="Neuron">
        <title>PDF cells are a GABA-responsive wake-promoting component of the Drosophila sleep circuit.</title>
        <authorList>
            <person name="Parisky K.M."/>
            <person name="Agosto J."/>
            <person name="Pulver S.R."/>
            <person name="Shang Y."/>
            <person name="Kuklin E."/>
            <person name="Hodge J.J."/>
            <person name="Kang K."/>
            <person name="Kang K."/>
            <person name="Liu X."/>
            <person name="Garrity P.A."/>
            <person name="Rosbash M."/>
            <person name="Griffith L.C."/>
        </authorList>
    </citation>
    <scope>FUNCTION</scope>
    <scope>DISRUPTION PHENOTYPE</scope>
</reference>
<reference key="12">
    <citation type="journal article" date="2009" name="Curr. Biol.">
        <title>The GABA(A) receptor RDL acts in peptidergic PDF neurons to promote sleep in Drosophila.</title>
        <authorList>
            <person name="Chung B.Y."/>
            <person name="Kilman V.L."/>
            <person name="Keath J.R."/>
            <person name="Pitman J.L."/>
            <person name="Allada R."/>
        </authorList>
    </citation>
    <scope>FUNCTION</scope>
    <scope>DISRUPTION PHENOTYPE</scope>
</reference>
<reference key="13">
    <citation type="journal article" date="2023" name="Chronobiol. Int.">
        <title>Pigment-dispersing factor and CCHamide1 in the Drosophila circadian clock network.</title>
        <authorList>
            <person name="Kuwano R."/>
            <person name="Katsura M."/>
            <person name="Iwata M."/>
            <person name="Yokosako T."/>
            <person name="Yoshii T."/>
        </authorList>
    </citation>
    <scope>FUNCTION</scope>
    <scope>DISRUPTION PHENOTYPE</scope>
</reference>
<protein>
    <recommendedName>
        <fullName>Protein PDF</fullName>
    </recommendedName>
    <component>
        <recommendedName>
            <fullName>PDF precursor-related peptide</fullName>
            <shortName>PAP</shortName>
        </recommendedName>
    </component>
    <component>
        <recommendedName>
            <fullName>Neuropeptide PDF</fullName>
        </recommendedName>
        <alternativeName>
            <fullName>Pigment-dispersing factor homolog</fullName>
        </alternativeName>
    </component>
</protein>
<organism>
    <name type="scientific">Drosophila melanogaster</name>
    <name type="common">Fruit fly</name>
    <dbReference type="NCBI Taxonomy" id="7227"/>
    <lineage>
        <taxon>Eukaryota</taxon>
        <taxon>Metazoa</taxon>
        <taxon>Ecdysozoa</taxon>
        <taxon>Arthropoda</taxon>
        <taxon>Hexapoda</taxon>
        <taxon>Insecta</taxon>
        <taxon>Pterygota</taxon>
        <taxon>Neoptera</taxon>
        <taxon>Endopterygota</taxon>
        <taxon>Diptera</taxon>
        <taxon>Brachycera</taxon>
        <taxon>Muscomorpha</taxon>
        <taxon>Ephydroidea</taxon>
        <taxon>Drosophilidae</taxon>
        <taxon>Drosophila</taxon>
        <taxon>Sophophora</taxon>
    </lineage>
</organism>
<sequence>MARYTYLVALVLLAICCQWGYCGAMAMPDEERYVRKEYNRDLLDWFNNVGVGQFSPGQVATLCRYPLILENSLGPSVPIRKRNSELINSLLSLPKNMNDAGK</sequence>